<name>GSA_FUSNN</name>
<proteinExistence type="inferred from homology"/>
<accession>Q8RFY7</accession>
<reference key="1">
    <citation type="journal article" date="2002" name="J. Bacteriol.">
        <title>Genome sequence and analysis of the oral bacterium Fusobacterium nucleatum strain ATCC 25586.</title>
        <authorList>
            <person name="Kapatral V."/>
            <person name="Anderson I."/>
            <person name="Ivanova N."/>
            <person name="Reznik G."/>
            <person name="Los T."/>
            <person name="Lykidis A."/>
            <person name="Bhattacharyya A."/>
            <person name="Bartman A."/>
            <person name="Gardner W."/>
            <person name="Grechkin G."/>
            <person name="Zhu L."/>
            <person name="Vasieva O."/>
            <person name="Chu L."/>
            <person name="Kogan Y."/>
            <person name="Chaga O."/>
            <person name="Goltsman E."/>
            <person name="Bernal A."/>
            <person name="Larsen N."/>
            <person name="D'Souza M."/>
            <person name="Walunas T."/>
            <person name="Pusch G."/>
            <person name="Haselkorn R."/>
            <person name="Fonstein M."/>
            <person name="Kyrpides N.C."/>
            <person name="Overbeek R."/>
        </authorList>
    </citation>
    <scope>NUCLEOTIDE SEQUENCE [LARGE SCALE GENOMIC DNA]</scope>
    <source>
        <strain>ATCC 25586 / DSM 15643 / BCRC 10681 / CIP 101130 / JCM 8532 / KCTC 2640 / LMG 13131 / VPI 4355</strain>
    </source>
</reference>
<feature type="chain" id="PRO_0000120412" description="Glutamate-1-semialdehyde 2,1-aminomutase">
    <location>
        <begin position="1"/>
        <end position="434"/>
    </location>
</feature>
<feature type="modified residue" description="N6-(pyridoxal phosphate)lysine" evidence="1">
    <location>
        <position position="266"/>
    </location>
</feature>
<protein>
    <recommendedName>
        <fullName evidence="1">Glutamate-1-semialdehyde 2,1-aminomutase</fullName>
        <shortName evidence="1">GSA</shortName>
        <ecNumber evidence="1">5.4.3.8</ecNumber>
    </recommendedName>
    <alternativeName>
        <fullName evidence="1">Glutamate-1-semialdehyde aminotransferase</fullName>
        <shortName evidence="1">GSA-AT</shortName>
    </alternativeName>
</protein>
<dbReference type="EC" id="5.4.3.8" evidence="1"/>
<dbReference type="EMBL" id="AE009951">
    <property type="protein sequence ID" value="AAL94736.1"/>
    <property type="molecule type" value="Genomic_DNA"/>
</dbReference>
<dbReference type="RefSeq" id="NP_603437.1">
    <property type="nucleotide sequence ID" value="NC_003454.1"/>
</dbReference>
<dbReference type="RefSeq" id="WP_011016463.1">
    <property type="nucleotide sequence ID" value="NZ_OZ209243.1"/>
</dbReference>
<dbReference type="SMR" id="Q8RFY7"/>
<dbReference type="FunCoup" id="Q8RFY7">
    <property type="interactions" value="340"/>
</dbReference>
<dbReference type="STRING" id="190304.FN0540"/>
<dbReference type="PaxDb" id="190304-FN0540"/>
<dbReference type="EnsemblBacteria" id="AAL94736">
    <property type="protein sequence ID" value="AAL94736"/>
    <property type="gene ID" value="FN0540"/>
</dbReference>
<dbReference type="GeneID" id="79783542"/>
<dbReference type="KEGG" id="fnu:FN0540"/>
<dbReference type="PATRIC" id="fig|190304.8.peg.1107"/>
<dbReference type="eggNOG" id="COG0001">
    <property type="taxonomic scope" value="Bacteria"/>
</dbReference>
<dbReference type="HOGENOM" id="CLU_016922_1_5_0"/>
<dbReference type="InParanoid" id="Q8RFY7"/>
<dbReference type="BioCyc" id="FNUC190304:G1FZS-1129-MONOMER"/>
<dbReference type="UniPathway" id="UPA00251">
    <property type="reaction ID" value="UER00317"/>
</dbReference>
<dbReference type="Proteomes" id="UP000002521">
    <property type="component" value="Chromosome"/>
</dbReference>
<dbReference type="GO" id="GO:0005737">
    <property type="term" value="C:cytoplasm"/>
    <property type="evidence" value="ECO:0007669"/>
    <property type="project" value="UniProtKB-SubCell"/>
</dbReference>
<dbReference type="GO" id="GO:0042286">
    <property type="term" value="F:glutamate-1-semialdehyde 2,1-aminomutase activity"/>
    <property type="evidence" value="ECO:0007669"/>
    <property type="project" value="UniProtKB-UniRule"/>
</dbReference>
<dbReference type="GO" id="GO:0030170">
    <property type="term" value="F:pyridoxal phosphate binding"/>
    <property type="evidence" value="ECO:0007669"/>
    <property type="project" value="InterPro"/>
</dbReference>
<dbReference type="GO" id="GO:0008483">
    <property type="term" value="F:transaminase activity"/>
    <property type="evidence" value="ECO:0007669"/>
    <property type="project" value="InterPro"/>
</dbReference>
<dbReference type="GO" id="GO:0006782">
    <property type="term" value="P:protoporphyrinogen IX biosynthetic process"/>
    <property type="evidence" value="ECO:0007669"/>
    <property type="project" value="UniProtKB-UniRule"/>
</dbReference>
<dbReference type="CDD" id="cd00610">
    <property type="entry name" value="OAT_like"/>
    <property type="match status" value="1"/>
</dbReference>
<dbReference type="FunFam" id="3.40.640.10:FF:000021">
    <property type="entry name" value="Glutamate-1-semialdehyde 2,1-aminomutase"/>
    <property type="match status" value="1"/>
</dbReference>
<dbReference type="Gene3D" id="3.90.1150.10">
    <property type="entry name" value="Aspartate Aminotransferase, domain 1"/>
    <property type="match status" value="1"/>
</dbReference>
<dbReference type="Gene3D" id="3.40.640.10">
    <property type="entry name" value="Type I PLP-dependent aspartate aminotransferase-like (Major domain)"/>
    <property type="match status" value="1"/>
</dbReference>
<dbReference type="HAMAP" id="MF_00375">
    <property type="entry name" value="HemL_aminotrans_3"/>
    <property type="match status" value="1"/>
</dbReference>
<dbReference type="InterPro" id="IPR004639">
    <property type="entry name" value="4pyrrol_synth_GluAld_NH2Trfase"/>
</dbReference>
<dbReference type="InterPro" id="IPR005814">
    <property type="entry name" value="Aminotrans_3"/>
</dbReference>
<dbReference type="InterPro" id="IPR049704">
    <property type="entry name" value="Aminotrans_3_PPA_site"/>
</dbReference>
<dbReference type="InterPro" id="IPR015424">
    <property type="entry name" value="PyrdxlP-dep_Trfase"/>
</dbReference>
<dbReference type="InterPro" id="IPR015421">
    <property type="entry name" value="PyrdxlP-dep_Trfase_major"/>
</dbReference>
<dbReference type="InterPro" id="IPR015422">
    <property type="entry name" value="PyrdxlP-dep_Trfase_small"/>
</dbReference>
<dbReference type="NCBIfam" id="TIGR00713">
    <property type="entry name" value="hemL"/>
    <property type="match status" value="1"/>
</dbReference>
<dbReference type="NCBIfam" id="NF000818">
    <property type="entry name" value="PRK00062.1"/>
    <property type="match status" value="1"/>
</dbReference>
<dbReference type="PANTHER" id="PTHR43713">
    <property type="entry name" value="GLUTAMATE-1-SEMIALDEHYDE 2,1-AMINOMUTASE"/>
    <property type="match status" value="1"/>
</dbReference>
<dbReference type="PANTHER" id="PTHR43713:SF3">
    <property type="entry name" value="GLUTAMATE-1-SEMIALDEHYDE 2,1-AMINOMUTASE 1, CHLOROPLASTIC-RELATED"/>
    <property type="match status" value="1"/>
</dbReference>
<dbReference type="Pfam" id="PF00202">
    <property type="entry name" value="Aminotran_3"/>
    <property type="match status" value="1"/>
</dbReference>
<dbReference type="SUPFAM" id="SSF53383">
    <property type="entry name" value="PLP-dependent transferases"/>
    <property type="match status" value="1"/>
</dbReference>
<dbReference type="PROSITE" id="PS00600">
    <property type="entry name" value="AA_TRANSFER_CLASS_3"/>
    <property type="match status" value="1"/>
</dbReference>
<gene>
    <name evidence="1" type="primary">hemL</name>
    <name type="ordered locus">FN0540</name>
</gene>
<keyword id="KW-0963">Cytoplasm</keyword>
<keyword id="KW-0413">Isomerase</keyword>
<keyword id="KW-0627">Porphyrin biosynthesis</keyword>
<keyword id="KW-0663">Pyridoxal phosphate</keyword>
<keyword id="KW-1185">Reference proteome</keyword>
<comment type="catalytic activity">
    <reaction evidence="1">
        <text>(S)-4-amino-5-oxopentanoate = 5-aminolevulinate</text>
        <dbReference type="Rhea" id="RHEA:14265"/>
        <dbReference type="ChEBI" id="CHEBI:57501"/>
        <dbReference type="ChEBI" id="CHEBI:356416"/>
        <dbReference type="EC" id="5.4.3.8"/>
    </reaction>
</comment>
<comment type="cofactor">
    <cofactor evidence="1">
        <name>pyridoxal 5'-phosphate</name>
        <dbReference type="ChEBI" id="CHEBI:597326"/>
    </cofactor>
</comment>
<comment type="pathway">
    <text evidence="1">Porphyrin-containing compound metabolism; protoporphyrin-IX biosynthesis; 5-aminolevulinate from L-glutamyl-tRNA(Glu): step 2/2.</text>
</comment>
<comment type="subunit">
    <text evidence="1">Homodimer.</text>
</comment>
<comment type="subcellular location">
    <subcellularLocation>
        <location evidence="1">Cytoplasm</location>
    </subcellularLocation>
</comment>
<comment type="similarity">
    <text evidence="1">Belongs to the class-III pyridoxal-phosphate-dependent aminotransferase family. HemL subfamily.</text>
</comment>
<organism>
    <name type="scientific">Fusobacterium nucleatum subsp. nucleatum (strain ATCC 25586 / DSM 15643 / BCRC 10681 / CIP 101130 / JCM 8532 / KCTC 2640 / LMG 13131 / VPI 4355)</name>
    <dbReference type="NCBI Taxonomy" id="190304"/>
    <lineage>
        <taxon>Bacteria</taxon>
        <taxon>Fusobacteriati</taxon>
        <taxon>Fusobacteriota</taxon>
        <taxon>Fusobacteriia</taxon>
        <taxon>Fusobacteriales</taxon>
        <taxon>Fusobacteriaceae</taxon>
        <taxon>Fusobacterium</taxon>
    </lineage>
</organism>
<sequence length="434" mass="47773">MVFKNSIDLYKKAVELIPGGVNSPVRAFKSVNREAPIFIKKGQGAKIWDEDDNEYIDYICSWGPLILGHNHPKVIEEVKKIIENGSSYGLPTKYEVDLAELIVDIVPSIEKVRLTTSGTEATMSAVRLARAYTQRNKILKFEGCYHGHSDALLVKSGSGLLTEGYQDSNGITDGVLKDTLTLPFGDIEKVKEILKNKDVACVIVEPIPANMGLIETHKEFLQGLGKVTEKTGTILIFDEVISGFRLALGGAQEFFGITPDLTTLGKIIGGGYPVGAFGGKKEIMDLVAPVGRVYHAGTLSGNPIASKAGFATISYLKENPNIYKELEEKTNYLIDNIEILAKKYSVNVCVNSMGSLFTIFFVDIDKVENLEDSLKSNTENFSIYFNTMLENGIVIPPSQFEAHFLSMAHTKKELNRTLEVIEMAFKKIGEKSGK</sequence>
<evidence type="ECO:0000255" key="1">
    <source>
        <dbReference type="HAMAP-Rule" id="MF_00375"/>
    </source>
</evidence>